<name>TPMT_SHEPA</name>
<feature type="chain" id="PRO_1000083764" description="Thiopurine S-methyltransferase">
    <location>
        <begin position="1"/>
        <end position="219"/>
    </location>
</feature>
<feature type="binding site" evidence="1">
    <location>
        <position position="10"/>
    </location>
    <ligand>
        <name>S-adenosyl-L-methionine</name>
        <dbReference type="ChEBI" id="CHEBI:59789"/>
    </ligand>
</feature>
<feature type="binding site" evidence="1">
    <location>
        <position position="45"/>
    </location>
    <ligand>
        <name>S-adenosyl-L-methionine</name>
        <dbReference type="ChEBI" id="CHEBI:59789"/>
    </ligand>
</feature>
<feature type="binding site" evidence="1">
    <location>
        <position position="66"/>
    </location>
    <ligand>
        <name>S-adenosyl-L-methionine</name>
        <dbReference type="ChEBI" id="CHEBI:59789"/>
    </ligand>
</feature>
<feature type="binding site" evidence="1">
    <location>
        <position position="123"/>
    </location>
    <ligand>
        <name>S-adenosyl-L-methionine</name>
        <dbReference type="ChEBI" id="CHEBI:59789"/>
    </ligand>
</feature>
<evidence type="ECO:0000255" key="1">
    <source>
        <dbReference type="HAMAP-Rule" id="MF_00812"/>
    </source>
</evidence>
<sequence>MQPSFWHDKWDAQQVGFHLSAVNPLLVKYWPQLELDANAQVFVPLCGKSLDMCFLAEQGHEVLGCELNELAVQQFYRENELAFDISTLAEHQRFHTEQVTIYQGDIFSLDAAEMPNTQAFYDRAALIAWPEEMRSAYARQLAKLVPANSTGLLITLDYPQAELNGPPFAVSDDWVQANLATDFEIERLSSEDVLSENPRFVNKQVSWLTESVYKLIRKG</sequence>
<organism>
    <name type="scientific">Shewanella pealeana (strain ATCC 700345 / ANG-SQ1)</name>
    <dbReference type="NCBI Taxonomy" id="398579"/>
    <lineage>
        <taxon>Bacteria</taxon>
        <taxon>Pseudomonadati</taxon>
        <taxon>Pseudomonadota</taxon>
        <taxon>Gammaproteobacteria</taxon>
        <taxon>Alteromonadales</taxon>
        <taxon>Shewanellaceae</taxon>
        <taxon>Shewanella</taxon>
    </lineage>
</organism>
<proteinExistence type="inferred from homology"/>
<reference key="1">
    <citation type="submission" date="2007-10" db="EMBL/GenBank/DDBJ databases">
        <title>Complete sequence of Shewanella pealeana ATCC 700345.</title>
        <authorList>
            <consortium name="US DOE Joint Genome Institute"/>
            <person name="Copeland A."/>
            <person name="Lucas S."/>
            <person name="Lapidus A."/>
            <person name="Barry K."/>
            <person name="Glavina del Rio T."/>
            <person name="Dalin E."/>
            <person name="Tice H."/>
            <person name="Pitluck S."/>
            <person name="Chertkov O."/>
            <person name="Brettin T."/>
            <person name="Bruce D."/>
            <person name="Detter J.C."/>
            <person name="Han C."/>
            <person name="Schmutz J."/>
            <person name="Larimer F."/>
            <person name="Land M."/>
            <person name="Hauser L."/>
            <person name="Kyrpides N."/>
            <person name="Kim E."/>
            <person name="Zhao J.-S.Z."/>
            <person name="Manno D."/>
            <person name="Hawari J."/>
            <person name="Richardson P."/>
        </authorList>
    </citation>
    <scope>NUCLEOTIDE SEQUENCE [LARGE SCALE GENOMIC DNA]</scope>
    <source>
        <strain>ATCC 700345 / ANG-SQ1</strain>
    </source>
</reference>
<protein>
    <recommendedName>
        <fullName evidence="1">Thiopurine S-methyltransferase</fullName>
        <ecNumber evidence="1">2.1.1.67</ecNumber>
    </recommendedName>
    <alternativeName>
        <fullName evidence="1">Thiopurine methyltransferase</fullName>
    </alternativeName>
</protein>
<accession>A8H029</accession>
<dbReference type="EC" id="2.1.1.67" evidence="1"/>
<dbReference type="EMBL" id="CP000851">
    <property type="protein sequence ID" value="ABV85916.1"/>
    <property type="molecule type" value="Genomic_DNA"/>
</dbReference>
<dbReference type="RefSeq" id="WP_012153854.1">
    <property type="nucleotide sequence ID" value="NC_009901.1"/>
</dbReference>
<dbReference type="SMR" id="A8H029"/>
<dbReference type="KEGG" id="spl:Spea_0588"/>
<dbReference type="eggNOG" id="COG0500">
    <property type="taxonomic scope" value="Bacteria"/>
</dbReference>
<dbReference type="HOGENOM" id="CLU_085515_1_0_6"/>
<dbReference type="OrthoDB" id="9778208at2"/>
<dbReference type="Proteomes" id="UP000002608">
    <property type="component" value="Chromosome"/>
</dbReference>
<dbReference type="GO" id="GO:0005737">
    <property type="term" value="C:cytoplasm"/>
    <property type="evidence" value="ECO:0007669"/>
    <property type="project" value="UniProtKB-SubCell"/>
</dbReference>
<dbReference type="GO" id="GO:0008119">
    <property type="term" value="F:thiopurine S-methyltransferase activity"/>
    <property type="evidence" value="ECO:0007669"/>
    <property type="project" value="UniProtKB-UniRule"/>
</dbReference>
<dbReference type="GO" id="GO:0032259">
    <property type="term" value="P:methylation"/>
    <property type="evidence" value="ECO:0007669"/>
    <property type="project" value="UniProtKB-KW"/>
</dbReference>
<dbReference type="GO" id="GO:0010038">
    <property type="term" value="P:response to metal ion"/>
    <property type="evidence" value="ECO:0007669"/>
    <property type="project" value="InterPro"/>
</dbReference>
<dbReference type="FunFam" id="3.40.50.150:FF:000101">
    <property type="entry name" value="Thiopurine S-methyltransferase"/>
    <property type="match status" value="1"/>
</dbReference>
<dbReference type="Gene3D" id="3.40.50.150">
    <property type="entry name" value="Vaccinia Virus protein VP39"/>
    <property type="match status" value="1"/>
</dbReference>
<dbReference type="HAMAP" id="MF_00812">
    <property type="entry name" value="Thiopur_methtran"/>
    <property type="match status" value="1"/>
</dbReference>
<dbReference type="InterPro" id="IPR029063">
    <property type="entry name" value="SAM-dependent_MTases_sf"/>
</dbReference>
<dbReference type="InterPro" id="IPR022474">
    <property type="entry name" value="Thiopur_S-MeTfrase_Se/Te_detox"/>
</dbReference>
<dbReference type="InterPro" id="IPR025835">
    <property type="entry name" value="Thiopurine_S-MeTrfase"/>
</dbReference>
<dbReference type="InterPro" id="IPR008854">
    <property type="entry name" value="TPMT"/>
</dbReference>
<dbReference type="NCBIfam" id="NF009732">
    <property type="entry name" value="PRK13255.1"/>
    <property type="match status" value="1"/>
</dbReference>
<dbReference type="NCBIfam" id="TIGR03840">
    <property type="entry name" value="TMPT_Se_Te"/>
    <property type="match status" value="1"/>
</dbReference>
<dbReference type="PANTHER" id="PTHR10259">
    <property type="entry name" value="THIOPURINE S-METHYLTRANSFERASE"/>
    <property type="match status" value="1"/>
</dbReference>
<dbReference type="PANTHER" id="PTHR10259:SF11">
    <property type="entry name" value="THIOPURINE S-METHYLTRANSFERASE"/>
    <property type="match status" value="1"/>
</dbReference>
<dbReference type="Pfam" id="PF05724">
    <property type="entry name" value="TPMT"/>
    <property type="match status" value="1"/>
</dbReference>
<dbReference type="PIRSF" id="PIRSF023956">
    <property type="entry name" value="Thiopurine_S-methyltransferase"/>
    <property type="match status" value="1"/>
</dbReference>
<dbReference type="SUPFAM" id="SSF53335">
    <property type="entry name" value="S-adenosyl-L-methionine-dependent methyltransferases"/>
    <property type="match status" value="1"/>
</dbReference>
<dbReference type="PROSITE" id="PS51585">
    <property type="entry name" value="SAM_MT_TPMT"/>
    <property type="match status" value="1"/>
</dbReference>
<gene>
    <name evidence="1" type="primary">tpm</name>
    <name type="ordered locus">Spea_0588</name>
</gene>
<keyword id="KW-0963">Cytoplasm</keyword>
<keyword id="KW-0489">Methyltransferase</keyword>
<keyword id="KW-1185">Reference proteome</keyword>
<keyword id="KW-0949">S-adenosyl-L-methionine</keyword>
<keyword id="KW-0808">Transferase</keyword>
<comment type="catalytic activity">
    <reaction evidence="1">
        <text>S-adenosyl-L-methionine + a thiopurine = S-adenosyl-L-homocysteine + a thiopurine S-methylether.</text>
        <dbReference type="EC" id="2.1.1.67"/>
    </reaction>
</comment>
<comment type="subcellular location">
    <subcellularLocation>
        <location evidence="1">Cytoplasm</location>
    </subcellularLocation>
</comment>
<comment type="similarity">
    <text evidence="1">Belongs to the class I-like SAM-binding methyltransferase superfamily. TPMT family.</text>
</comment>